<sequence>MGFLSGKRILVTGVASKLSIAYGIAQAMHREGAELAFTYQNDKLKGRVEEFAAQLGSDIVLQCDVAEDASIDTMFAELGKVWPKFDGFVHSIGFAPGDQLDGDYVNAVTREGFKIAHDISSYSFVAMAKACRSMLNPGSALLTLSYLGAERAIPNYNVMGLAKASLEANVRYMANAMGPEGVRVNAISAGPIRTLAASGIKDFRKMLAHCEAVTPIRRTVTIEDVGNSAAFLCSDLSAGISGEVVHVDGGFSIAAMNELELK</sequence>
<organism>
    <name type="scientific">Escherichia coli (strain K12)</name>
    <dbReference type="NCBI Taxonomy" id="83333"/>
    <lineage>
        <taxon>Bacteria</taxon>
        <taxon>Pseudomonadati</taxon>
        <taxon>Pseudomonadota</taxon>
        <taxon>Gammaproteobacteria</taxon>
        <taxon>Enterobacterales</taxon>
        <taxon>Enterobacteriaceae</taxon>
        <taxon>Escherichia</taxon>
    </lineage>
</organism>
<dbReference type="EC" id="1.3.1.9"/>
<dbReference type="EMBL" id="M97219">
    <property type="protein sequence ID" value="AAA17755.1"/>
    <property type="molecule type" value="Unassigned_DNA"/>
</dbReference>
<dbReference type="EMBL" id="X78733">
    <property type="protein sequence ID" value="CAA55381.1"/>
    <property type="molecule type" value="Genomic_DNA"/>
</dbReference>
<dbReference type="EMBL" id="U00096">
    <property type="protein sequence ID" value="AAC74370.1"/>
    <property type="molecule type" value="Genomic_DNA"/>
</dbReference>
<dbReference type="EMBL" id="AP009048">
    <property type="protein sequence ID" value="BAA14841.2"/>
    <property type="molecule type" value="Genomic_DNA"/>
</dbReference>
<dbReference type="PIR" id="S48029">
    <property type="entry name" value="S48029"/>
</dbReference>
<dbReference type="RefSeq" id="NP_415804.1">
    <property type="nucleotide sequence ID" value="NC_000913.3"/>
</dbReference>
<dbReference type="RefSeq" id="WP_000506490.1">
    <property type="nucleotide sequence ID" value="NZ_STEB01000005.1"/>
</dbReference>
<dbReference type="PDB" id="1C14">
    <property type="method" value="X-ray"/>
    <property type="resolution" value="2.00 A"/>
    <property type="chains" value="A/B=1-262"/>
</dbReference>
<dbReference type="PDB" id="1D8A">
    <property type="method" value="X-ray"/>
    <property type="resolution" value="2.20 A"/>
    <property type="chains" value="A/B=2-262"/>
</dbReference>
<dbReference type="PDB" id="1DFG">
    <property type="method" value="X-ray"/>
    <property type="resolution" value="2.50 A"/>
    <property type="chains" value="A/B=2-262"/>
</dbReference>
<dbReference type="PDB" id="1DFH">
    <property type="method" value="X-ray"/>
    <property type="resolution" value="2.20 A"/>
    <property type="chains" value="A/B=2-262"/>
</dbReference>
<dbReference type="PDB" id="1DFI">
    <property type="method" value="X-ray"/>
    <property type="resolution" value="2.09 A"/>
    <property type="chains" value="A/B/C/D=2-262"/>
</dbReference>
<dbReference type="PDB" id="1I2Z">
    <property type="method" value="X-ray"/>
    <property type="resolution" value="2.80 A"/>
    <property type="chains" value="A/B=1-262"/>
</dbReference>
<dbReference type="PDB" id="1I30">
    <property type="method" value="X-ray"/>
    <property type="resolution" value="2.40 A"/>
    <property type="chains" value="A/B=1-262"/>
</dbReference>
<dbReference type="PDB" id="1LX6">
    <property type="method" value="X-ray"/>
    <property type="resolution" value="2.40 A"/>
    <property type="chains" value="A/B=1-262"/>
</dbReference>
<dbReference type="PDB" id="1LXC">
    <property type="method" value="X-ray"/>
    <property type="resolution" value="2.40 A"/>
    <property type="chains" value="A/B=1-262"/>
</dbReference>
<dbReference type="PDB" id="1MFP">
    <property type="method" value="X-ray"/>
    <property type="resolution" value="2.33 A"/>
    <property type="chains" value="A/B=1-262"/>
</dbReference>
<dbReference type="PDB" id="1QG6">
    <property type="method" value="X-ray"/>
    <property type="resolution" value="1.90 A"/>
    <property type="chains" value="A/B/C/D=2-262"/>
</dbReference>
<dbReference type="PDB" id="1QSG">
    <property type="method" value="X-ray"/>
    <property type="resolution" value="1.75 A"/>
    <property type="chains" value="A/B/C/D/E/F/G/H=1-262"/>
</dbReference>
<dbReference type="PDB" id="2FHS">
    <property type="method" value="X-ray"/>
    <property type="resolution" value="2.70 A"/>
    <property type="chains" value="A/B=1-262"/>
</dbReference>
<dbReference type="PDB" id="3PJD">
    <property type="method" value="X-ray"/>
    <property type="resolution" value="2.50 A"/>
    <property type="chains" value="A/B=1-262"/>
</dbReference>
<dbReference type="PDB" id="3PJE">
    <property type="method" value="X-ray"/>
    <property type="resolution" value="2.50 A"/>
    <property type="chains" value="A/B=1-262"/>
</dbReference>
<dbReference type="PDB" id="3PJF">
    <property type="method" value="X-ray"/>
    <property type="resolution" value="1.90 A"/>
    <property type="chains" value="A/B=1-262"/>
</dbReference>
<dbReference type="PDB" id="4JQC">
    <property type="method" value="X-ray"/>
    <property type="resolution" value="2.80 A"/>
    <property type="chains" value="A/B=1-262"/>
</dbReference>
<dbReference type="PDB" id="4JX8">
    <property type="method" value="X-ray"/>
    <property type="resolution" value="3.20 A"/>
    <property type="chains" value="A/B=1-262"/>
</dbReference>
<dbReference type="PDB" id="5CFZ">
    <property type="method" value="X-ray"/>
    <property type="resolution" value="1.97 A"/>
    <property type="chains" value="A/B=1-262"/>
</dbReference>
<dbReference type="PDB" id="5CG1">
    <property type="method" value="X-ray"/>
    <property type="resolution" value="2.07 A"/>
    <property type="chains" value="A/B=1-262"/>
</dbReference>
<dbReference type="PDB" id="5CG2">
    <property type="method" value="X-ray"/>
    <property type="resolution" value="2.11 A"/>
    <property type="chains" value="A/B=1-262"/>
</dbReference>
<dbReference type="PDB" id="7UM8">
    <property type="method" value="X-ray"/>
    <property type="resolution" value="1.70 A"/>
    <property type="chains" value="A/B=1-262"/>
</dbReference>
<dbReference type="PDB" id="7UMW">
    <property type="method" value="X-ray"/>
    <property type="resolution" value="1.54 A"/>
    <property type="chains" value="A/B=1-262"/>
</dbReference>
<dbReference type="PDBsum" id="1C14"/>
<dbReference type="PDBsum" id="1D8A"/>
<dbReference type="PDBsum" id="1DFG"/>
<dbReference type="PDBsum" id="1DFH"/>
<dbReference type="PDBsum" id="1DFI"/>
<dbReference type="PDBsum" id="1I2Z"/>
<dbReference type="PDBsum" id="1I30"/>
<dbReference type="PDBsum" id="1LX6"/>
<dbReference type="PDBsum" id="1LXC"/>
<dbReference type="PDBsum" id="1MFP"/>
<dbReference type="PDBsum" id="1QG6"/>
<dbReference type="PDBsum" id="1QSG"/>
<dbReference type="PDBsum" id="2FHS"/>
<dbReference type="PDBsum" id="3PJD"/>
<dbReference type="PDBsum" id="3PJE"/>
<dbReference type="PDBsum" id="3PJF"/>
<dbReference type="PDBsum" id="4JQC"/>
<dbReference type="PDBsum" id="4JX8"/>
<dbReference type="PDBsum" id="5CFZ"/>
<dbReference type="PDBsum" id="5CG1"/>
<dbReference type="PDBsum" id="5CG2"/>
<dbReference type="PDBsum" id="7UM8"/>
<dbReference type="PDBsum" id="7UMW"/>
<dbReference type="SMR" id="P0AEK4"/>
<dbReference type="BioGRID" id="4260135">
    <property type="interactions" value="293"/>
</dbReference>
<dbReference type="DIP" id="DIP-31867N"/>
<dbReference type="FunCoup" id="P0AEK4">
    <property type="interactions" value="535"/>
</dbReference>
<dbReference type="IntAct" id="P0AEK4">
    <property type="interactions" value="12"/>
</dbReference>
<dbReference type="STRING" id="511145.b1288"/>
<dbReference type="BindingDB" id="P0AEK4"/>
<dbReference type="ChEMBL" id="CHEMBL1857"/>
<dbReference type="ChEMBL" id="CHEMBL2364678"/>
<dbReference type="DrugBank" id="DB04030">
    <property type="generic name" value="1,3,4,9-Tetrahydro-2-(Hydroxybenzoyl)-9-[(4-Hydroxyphenyl)Methyl]-6-Methoxy-2h-Pyrido[3,4-B]Indole"/>
</dbReference>
<dbReference type="DrugBank" id="DB08265">
    <property type="generic name" value="2-(TOLUENE-4-SULFONYL)-2H-BENZO[D][1,2,3]DIAZABORININ-1-OL"/>
</dbReference>
<dbReference type="DrugBank" id="DB01865">
    <property type="generic name" value="3-(6-Aminopyridin-3-Yl)-N-Methyl-N-[(1-Methyl-1h-Indol-2-Yl)Methyl]Acrylamide"/>
</dbReference>
<dbReference type="DrugBank" id="DB03534">
    <property type="generic name" value="3-[(Acetyl-Methyl-Amino)-Methyl]-4-Amino-N-Methyl-N-(1-Methyl-1h-Indol-2-Ylmethyl)-Benzamide"/>
</dbReference>
<dbReference type="DrugBank" id="DB03030">
    <property type="generic name" value="4-(2-Thienyl)-1-(4-Methylbenzyl)-1h-Imidazole"/>
</dbReference>
<dbReference type="DrugBank" id="DB08605">
    <property type="generic name" value="6-METHYL-2(PROPANE-1-SULFONYL)-2H-THIENO[3,2-D][1,2,3]DIAZABORININ-1-OL"/>
</dbReference>
<dbReference type="DrugBank" id="DB02379">
    <property type="generic name" value="Beta-D-Glucose"/>
</dbReference>
<dbReference type="DrugBank" id="DB01691">
    <property type="generic name" value="Indole Naphthyridinone"/>
</dbReference>
<dbReference type="DrugBank" id="DB08604">
    <property type="generic name" value="Triclosan"/>
</dbReference>
<dbReference type="DrugCentral" id="P0AEK4"/>
<dbReference type="SwissLipids" id="SLP:000001775"/>
<dbReference type="jPOST" id="P0AEK4"/>
<dbReference type="PaxDb" id="511145-b1288"/>
<dbReference type="EnsemblBacteria" id="AAC74370">
    <property type="protein sequence ID" value="AAC74370"/>
    <property type="gene ID" value="b1288"/>
</dbReference>
<dbReference type="GeneID" id="93775413"/>
<dbReference type="GeneID" id="945870"/>
<dbReference type="KEGG" id="ecj:JW1281"/>
<dbReference type="KEGG" id="eco:b1288"/>
<dbReference type="KEGG" id="ecoc:C3026_07565"/>
<dbReference type="PATRIC" id="fig|1411691.4.peg.991"/>
<dbReference type="EchoBASE" id="EB1490"/>
<dbReference type="eggNOG" id="COG0623">
    <property type="taxonomic scope" value="Bacteria"/>
</dbReference>
<dbReference type="InParanoid" id="P0AEK4"/>
<dbReference type="OMA" id="GILDMIH"/>
<dbReference type="OrthoDB" id="9803628at2"/>
<dbReference type="PhylomeDB" id="P0AEK4"/>
<dbReference type="BioCyc" id="EcoCyc:ENOYL-ACP-REDUCT-NADH-MONOMER"/>
<dbReference type="BioCyc" id="MetaCyc:ENOYL-ACP-REDUCT-NADH-MONOMER"/>
<dbReference type="BRENDA" id="1.3.1.9">
    <property type="organism ID" value="2026"/>
</dbReference>
<dbReference type="SABIO-RK" id="P0AEK4"/>
<dbReference type="UniPathway" id="UPA00078"/>
<dbReference type="UniPathway" id="UPA00094"/>
<dbReference type="EvolutionaryTrace" id="P0AEK4"/>
<dbReference type="PRO" id="PR:P0AEK4"/>
<dbReference type="Proteomes" id="UP000000625">
    <property type="component" value="Chromosome"/>
</dbReference>
<dbReference type="GO" id="GO:1902494">
    <property type="term" value="C:catalytic complex"/>
    <property type="evidence" value="ECO:0000314"/>
    <property type="project" value="UniProtKB"/>
</dbReference>
<dbReference type="GO" id="GO:0005829">
    <property type="term" value="C:cytosol"/>
    <property type="evidence" value="ECO:0000314"/>
    <property type="project" value="EcoCyc"/>
</dbReference>
<dbReference type="GO" id="GO:0016020">
    <property type="term" value="C:membrane"/>
    <property type="evidence" value="ECO:0007005"/>
    <property type="project" value="UniProtKB"/>
</dbReference>
<dbReference type="GO" id="GO:0032991">
    <property type="term" value="C:protein-containing complex"/>
    <property type="evidence" value="ECO:0000314"/>
    <property type="project" value="EcoCyc"/>
</dbReference>
<dbReference type="GO" id="GO:0004318">
    <property type="term" value="F:enoyl-[acyl-carrier-protein] reductase (NADH) activity"/>
    <property type="evidence" value="ECO:0000314"/>
    <property type="project" value="UniProtKB"/>
</dbReference>
<dbReference type="GO" id="GO:0042802">
    <property type="term" value="F:identical protein binding"/>
    <property type="evidence" value="ECO:0000314"/>
    <property type="project" value="EcoCyc"/>
</dbReference>
<dbReference type="GO" id="GO:0070404">
    <property type="term" value="F:NADH binding"/>
    <property type="evidence" value="ECO:0000314"/>
    <property type="project" value="UniProtKB"/>
</dbReference>
<dbReference type="GO" id="GO:0009102">
    <property type="term" value="P:biotin biosynthetic process"/>
    <property type="evidence" value="ECO:0000315"/>
    <property type="project" value="UniProtKB"/>
</dbReference>
<dbReference type="GO" id="GO:0030497">
    <property type="term" value="P:fatty acid elongation"/>
    <property type="evidence" value="ECO:0000314"/>
    <property type="project" value="UniProtKB"/>
</dbReference>
<dbReference type="GO" id="GO:0008610">
    <property type="term" value="P:lipid biosynthetic process"/>
    <property type="evidence" value="ECO:0000314"/>
    <property type="project" value="EcoCyc"/>
</dbReference>
<dbReference type="GO" id="GO:0051289">
    <property type="term" value="P:protein homotetramerization"/>
    <property type="evidence" value="ECO:0000314"/>
    <property type="project" value="EcoCyc"/>
</dbReference>
<dbReference type="GO" id="GO:0046677">
    <property type="term" value="P:response to antibiotic"/>
    <property type="evidence" value="ECO:0007669"/>
    <property type="project" value="UniProtKB-KW"/>
</dbReference>
<dbReference type="CDD" id="cd05372">
    <property type="entry name" value="ENR_SDR"/>
    <property type="match status" value="1"/>
</dbReference>
<dbReference type="FunFam" id="1.10.8.400:FF:000001">
    <property type="entry name" value="Enoyl-[acyl-carrier-protein] reductase [NADH]"/>
    <property type="match status" value="1"/>
</dbReference>
<dbReference type="FunFam" id="3.40.50.720:FF:000054">
    <property type="entry name" value="Enoyl-[acyl-carrier-protein] reductase [NADH]"/>
    <property type="match status" value="1"/>
</dbReference>
<dbReference type="Gene3D" id="3.40.50.720">
    <property type="entry name" value="NAD(P)-binding Rossmann-like Domain"/>
    <property type="match status" value="1"/>
</dbReference>
<dbReference type="InterPro" id="IPR014358">
    <property type="entry name" value="Enoyl-ACP_Rdtase_NADH"/>
</dbReference>
<dbReference type="InterPro" id="IPR036291">
    <property type="entry name" value="NAD(P)-bd_dom_sf"/>
</dbReference>
<dbReference type="InterPro" id="IPR002347">
    <property type="entry name" value="SDR_fam"/>
</dbReference>
<dbReference type="NCBIfam" id="NF005938">
    <property type="entry name" value="PRK07984.1"/>
    <property type="match status" value="1"/>
</dbReference>
<dbReference type="PANTHER" id="PTHR43159">
    <property type="entry name" value="ENOYL-[ACYL-CARRIER-PROTEIN] REDUCTASE"/>
    <property type="match status" value="1"/>
</dbReference>
<dbReference type="PANTHER" id="PTHR43159:SF2">
    <property type="entry name" value="ENOYL-[ACYL-CARRIER-PROTEIN] REDUCTASE [NADH], CHLOROPLASTIC"/>
    <property type="match status" value="1"/>
</dbReference>
<dbReference type="Pfam" id="PF13561">
    <property type="entry name" value="adh_short_C2"/>
    <property type="match status" value="1"/>
</dbReference>
<dbReference type="PIRSF" id="PIRSF000094">
    <property type="entry name" value="Enoyl-ACP_rdct"/>
    <property type="match status" value="1"/>
</dbReference>
<dbReference type="PRINTS" id="PR00081">
    <property type="entry name" value="GDHRDH"/>
</dbReference>
<dbReference type="SUPFAM" id="SSF51735">
    <property type="entry name" value="NAD(P)-binding Rossmann-fold domains"/>
    <property type="match status" value="1"/>
</dbReference>
<feature type="initiator methionine" description="Removed" evidence="11 19 21">
    <location>
        <position position="1"/>
    </location>
</feature>
<feature type="chain" id="PRO_0000054899" description="Enoyl-[acyl-carrier-protein] reductase [NADH] FabI">
    <location>
        <begin position="2"/>
        <end position="262"/>
    </location>
</feature>
<feature type="active site" description="Proton acceptor" evidence="1">
    <location>
        <position position="146"/>
    </location>
</feature>
<feature type="active site" description="Proton acceptor" evidence="1">
    <location>
        <position position="156"/>
    </location>
</feature>
<feature type="binding site" evidence="2 3 4 5 8 9 10 18">
    <location>
        <position position="13"/>
    </location>
    <ligand>
        <name>NAD(+)</name>
        <dbReference type="ChEBI" id="CHEBI:57540"/>
    </ligand>
</feature>
<feature type="binding site" evidence="2 3 4 5 8 9 10 18">
    <location>
        <begin position="19"/>
        <end position="20"/>
    </location>
    <ligand>
        <name>NAD(+)</name>
        <dbReference type="ChEBI" id="CHEBI:57540"/>
    </ligand>
</feature>
<feature type="binding site" evidence="2 3 4 5 8 9 10 18">
    <location>
        <position position="40"/>
    </location>
    <ligand>
        <name>NAD(+)</name>
        <dbReference type="ChEBI" id="CHEBI:57540"/>
    </ligand>
</feature>
<feature type="binding site" evidence="2 3 4 5 8 9 10 18">
    <location>
        <begin position="64"/>
        <end position="65"/>
    </location>
    <ligand>
        <name>NAD(+)</name>
        <dbReference type="ChEBI" id="CHEBI:57540"/>
    </ligand>
</feature>
<feature type="binding site" evidence="2 3 4 5 8 9 10 18">
    <location>
        <position position="92"/>
    </location>
    <ligand>
        <name>NAD(+)</name>
        <dbReference type="ChEBI" id="CHEBI:57540"/>
    </ligand>
</feature>
<feature type="binding site">
    <location>
        <position position="95"/>
    </location>
    <ligand>
        <name>substrate</name>
    </ligand>
</feature>
<feature type="binding site" evidence="2 3 4 5 8 9 10 18">
    <location>
        <position position="163"/>
    </location>
    <ligand>
        <name>NAD(+)</name>
        <dbReference type="ChEBI" id="CHEBI:57540"/>
    </ligand>
</feature>
<feature type="binding site" evidence="2 3 4 5 8 9 10 18">
    <location>
        <begin position="192"/>
        <end position="196"/>
    </location>
    <ligand>
        <name>NAD(+)</name>
        <dbReference type="ChEBI" id="CHEBI:57540"/>
    </ligand>
</feature>
<feature type="site" description="Involved in acyl-ACP binding">
    <location>
        <position position="201"/>
    </location>
</feature>
<feature type="site" description="Involved in acyl-ACP binding">
    <location>
        <position position="204"/>
    </location>
</feature>
<feature type="site" description="Involved in acyl-ACP binding">
    <location>
        <position position="205"/>
    </location>
</feature>
<feature type="mutagenesis site" description="Diazaborine resistance." evidence="11 20">
    <original>G</original>
    <variation>S</variation>
    <location>
        <position position="93"/>
    </location>
</feature>
<feature type="mutagenesis site" description="Triclosan resistance." evidence="11 20">
    <original>G</original>
    <variation>V</variation>
    <location>
        <position position="93"/>
    </location>
</feature>
<feature type="mutagenesis site" description="Large impact on catalysis, with kcat and kcat/Km for DD-ACP decreasing by around 50-fold compared with wild-type." evidence="12">
    <original>Y</original>
    <variation>F</variation>
    <location>
        <position position="146"/>
    </location>
</feature>
<feature type="mutagenesis site" description="No effect on substrate reduction." evidence="12">
    <original>Y</original>
    <variation>F</variation>
    <location>
        <position position="156"/>
    </location>
</feature>
<feature type="mutagenesis site" description="Triclosan resistance." evidence="20">
    <original>M</original>
    <variation>T</variation>
    <location>
        <position position="159"/>
    </location>
</feature>
<feature type="mutagenesis site" description="No effect on substrate reduction." evidence="12">
    <original>K</original>
    <variation>A</variation>
    <location>
        <position position="201"/>
    </location>
</feature>
<feature type="mutagenesis site" description="Little activity toward DD-CoA and DD-ACP." evidence="12">
    <original>K</original>
    <variation>E</variation>
    <location>
        <position position="201"/>
    </location>
</feature>
<feature type="mutagenesis site" description="Triclosan resistance." evidence="20">
    <original>F</original>
    <variation>L</variation>
    <location>
        <position position="203"/>
    </location>
</feature>
<feature type="mutagenesis site" description="No effect on substrate reduction." evidence="12">
    <original>R</original>
    <variation>A</variation>
    <location>
        <position position="204"/>
    </location>
</feature>
<feature type="mutagenesis site" description="Causes a further reduction in kcat/Km for reduction of DD-ACP without affecting kcat/Km for the DD-CoA substrate." evidence="12">
    <original>R</original>
    <variation>E</variation>
    <location>
        <position position="204"/>
    </location>
</feature>
<feature type="mutagenesis site" description="No effect on substrate reduction." evidence="12">
    <original>K</original>
    <variation>A</variation>
    <location>
        <position position="205"/>
    </location>
</feature>
<feature type="mutagenesis site" description="Causes a further reduction in kcat/Km for reduction of DD-ACP without affecting kcat/Km for the DD-CoA substrate. Has a larger impact on substrate reduction." evidence="12">
    <original>K</original>
    <variation>E</variation>
    <location>
        <position position="205"/>
    </location>
</feature>
<feature type="mutagenesis site" description="Produces temperature-sensitive phenotype.">
    <original>S</original>
    <variation>F</variation>
    <location>
        <position position="241"/>
    </location>
</feature>
<feature type="turn" evidence="27">
    <location>
        <begin position="3"/>
        <end position="6"/>
    </location>
</feature>
<feature type="strand" evidence="27">
    <location>
        <begin position="8"/>
        <end position="11"/>
    </location>
</feature>
<feature type="strand" evidence="24">
    <location>
        <begin position="16"/>
        <end position="19"/>
    </location>
</feature>
<feature type="helix" evidence="27">
    <location>
        <begin position="20"/>
        <end position="30"/>
    </location>
</feature>
<feature type="strand" evidence="27">
    <location>
        <begin position="34"/>
        <end position="41"/>
    </location>
</feature>
<feature type="helix" evidence="27">
    <location>
        <begin position="42"/>
        <end position="54"/>
    </location>
</feature>
<feature type="strand" evidence="27">
    <location>
        <begin position="60"/>
        <end position="62"/>
    </location>
</feature>
<feature type="helix" evidence="27">
    <location>
        <begin position="68"/>
        <end position="79"/>
    </location>
</feature>
<feature type="strand" evidence="27">
    <location>
        <begin position="83"/>
        <end position="90"/>
    </location>
</feature>
<feature type="helix" evidence="27">
    <location>
        <begin position="97"/>
        <end position="100"/>
    </location>
</feature>
<feature type="strand" evidence="26">
    <location>
        <begin position="101"/>
        <end position="103"/>
    </location>
</feature>
<feature type="helix" evidence="27">
    <location>
        <begin position="104"/>
        <end position="107"/>
    </location>
</feature>
<feature type="helix" evidence="27">
    <location>
        <begin position="110"/>
        <end position="120"/>
    </location>
</feature>
<feature type="helix" evidence="27">
    <location>
        <begin position="122"/>
        <end position="131"/>
    </location>
</feature>
<feature type="helix" evidence="27">
    <location>
        <begin position="132"/>
        <end position="134"/>
    </location>
</feature>
<feature type="strand" evidence="27">
    <location>
        <begin position="135"/>
        <end position="145"/>
    </location>
</feature>
<feature type="helix" evidence="27">
    <location>
        <begin position="147"/>
        <end position="149"/>
    </location>
</feature>
<feature type="turn" evidence="27">
    <location>
        <begin position="154"/>
        <end position="157"/>
    </location>
</feature>
<feature type="helix" evidence="27">
    <location>
        <begin position="158"/>
        <end position="177"/>
    </location>
</feature>
<feature type="helix" evidence="27">
    <location>
        <begin position="178"/>
        <end position="180"/>
    </location>
</feature>
<feature type="strand" evidence="27">
    <location>
        <begin position="182"/>
        <end position="189"/>
    </location>
</feature>
<feature type="helix" evidence="27">
    <location>
        <begin position="195"/>
        <end position="197"/>
    </location>
</feature>
<feature type="strand" evidence="25">
    <location>
        <begin position="200"/>
        <end position="202"/>
    </location>
</feature>
<feature type="helix" evidence="27">
    <location>
        <begin position="203"/>
        <end position="213"/>
    </location>
</feature>
<feature type="helix" evidence="27">
    <location>
        <begin position="222"/>
        <end position="232"/>
    </location>
</feature>
<feature type="helix" evidence="27">
    <location>
        <begin position="235"/>
        <end position="237"/>
    </location>
</feature>
<feature type="strand" evidence="27">
    <location>
        <begin position="244"/>
        <end position="248"/>
    </location>
</feature>
<feature type="helix" evidence="27">
    <location>
        <begin position="251"/>
        <end position="253"/>
    </location>
</feature>
<accession>P0AEK4</accession>
<accession>P29132</accession>
<name>FABI_ECOLI</name>
<keyword id="KW-0002">3D-structure</keyword>
<keyword id="KW-0046">Antibiotic resistance</keyword>
<keyword id="KW-0903">Direct protein sequencing</keyword>
<keyword id="KW-0275">Fatty acid biosynthesis</keyword>
<keyword id="KW-0276">Fatty acid metabolism</keyword>
<keyword id="KW-0444">Lipid biosynthesis</keyword>
<keyword id="KW-0443">Lipid metabolism</keyword>
<keyword id="KW-0520">NAD</keyword>
<keyword id="KW-0560">Oxidoreductase</keyword>
<keyword id="KW-1185">Reference proteome</keyword>
<evidence type="ECO:0000250" key="1"/>
<evidence type="ECO:0000269" key="2">
    <source>
    </source>
</evidence>
<evidence type="ECO:0000269" key="3">
    <source>
    </source>
</evidence>
<evidence type="ECO:0000269" key="4">
    <source>
    </source>
</evidence>
<evidence type="ECO:0000269" key="5">
    <source>
    </source>
</evidence>
<evidence type="ECO:0000269" key="6">
    <source>
    </source>
</evidence>
<evidence type="ECO:0000269" key="7">
    <source>
    </source>
</evidence>
<evidence type="ECO:0000269" key="8">
    <source>
    </source>
</evidence>
<evidence type="ECO:0000269" key="9">
    <source>
    </source>
</evidence>
<evidence type="ECO:0000269" key="10">
    <source>
    </source>
</evidence>
<evidence type="ECO:0000269" key="11">
    <source>
    </source>
</evidence>
<evidence type="ECO:0000269" key="12">
    <source>
    </source>
</evidence>
<evidence type="ECO:0000269" key="13">
    <source>
    </source>
</evidence>
<evidence type="ECO:0000269" key="14">
    <source>
    </source>
</evidence>
<evidence type="ECO:0000269" key="15">
    <source>
    </source>
</evidence>
<evidence type="ECO:0000269" key="16">
    <source>
    </source>
</evidence>
<evidence type="ECO:0000269" key="17">
    <source>
    </source>
</evidence>
<evidence type="ECO:0000269" key="18">
    <source>
    </source>
</evidence>
<evidence type="ECO:0000269" key="19">
    <source>
    </source>
</evidence>
<evidence type="ECO:0000269" key="20">
    <source>
    </source>
</evidence>
<evidence type="ECO:0000269" key="21">
    <source ref="8"/>
</evidence>
<evidence type="ECO:0000305" key="22"/>
<evidence type="ECO:0000305" key="23">
    <source>
    </source>
</evidence>
<evidence type="ECO:0007829" key="24">
    <source>
        <dbReference type="PDB" id="1DFI"/>
    </source>
</evidence>
<evidence type="ECO:0007829" key="25">
    <source>
        <dbReference type="PDB" id="1MFP"/>
    </source>
</evidence>
<evidence type="ECO:0007829" key="26">
    <source>
        <dbReference type="PDB" id="4JX8"/>
    </source>
</evidence>
<evidence type="ECO:0007829" key="27">
    <source>
        <dbReference type="PDB" id="7UMW"/>
    </source>
</evidence>
<protein>
    <recommendedName>
        <fullName>Enoyl-[acyl-carrier-protein] reductase [NADH] FabI</fullName>
        <shortName>ENR</shortName>
        <ecNumber>1.3.1.9</ecNumber>
    </recommendedName>
    <alternativeName>
        <fullName>NADH-dependent enoyl-ACP reductase</fullName>
    </alternativeName>
</protein>
<gene>
    <name type="primary">fabI</name>
    <name type="synonym">envM</name>
    <name type="ordered locus">b1288</name>
    <name type="ordered locus">JW1281</name>
</gene>
<comment type="function">
    <text evidence="6 14 15 16 17">Catalyzes the reduction of a carbon-carbon double bond in an enoyl moiety that is covalently linked to an acyl carrier protein (ACP). Involved in the elongation cycle of fatty acid which are used in the lipid metabolism and in the biotin biosynthesis.</text>
</comment>
<comment type="catalytic activity">
    <reaction evidence="6 7 15 16 17">
        <text>a 2,3-saturated acyl-[ACP] + NAD(+) = a (2E)-enoyl-[ACP] + NADH + H(+)</text>
        <dbReference type="Rhea" id="RHEA:10240"/>
        <dbReference type="Rhea" id="RHEA-COMP:9925"/>
        <dbReference type="Rhea" id="RHEA-COMP:9926"/>
        <dbReference type="ChEBI" id="CHEBI:15378"/>
        <dbReference type="ChEBI" id="CHEBI:57540"/>
        <dbReference type="ChEBI" id="CHEBI:57945"/>
        <dbReference type="ChEBI" id="CHEBI:78784"/>
        <dbReference type="ChEBI" id="CHEBI:78785"/>
        <dbReference type="EC" id="1.3.1.9"/>
    </reaction>
    <physiologicalReaction direction="right-to-left" evidence="6 7 15 16 17">
        <dbReference type="Rhea" id="RHEA:10242"/>
    </physiologicalReaction>
</comment>
<comment type="catalytic activity">
    <reaction evidence="6 7 15 16 17">
        <text>(2E)-butenoyl-[ACP] + NADH + H(+) = butanoyl-[ACP] + NAD(+)</text>
        <dbReference type="Rhea" id="RHEA:54868"/>
        <dbReference type="Rhea" id="RHEA-COMP:9627"/>
        <dbReference type="Rhea" id="RHEA-COMP:9628"/>
        <dbReference type="ChEBI" id="CHEBI:15378"/>
        <dbReference type="ChEBI" id="CHEBI:57540"/>
        <dbReference type="ChEBI" id="CHEBI:57945"/>
        <dbReference type="ChEBI" id="CHEBI:78453"/>
        <dbReference type="ChEBI" id="CHEBI:78454"/>
    </reaction>
    <physiologicalReaction direction="left-to-right" evidence="6 7 15 16 17">
        <dbReference type="Rhea" id="RHEA:54869"/>
    </physiologicalReaction>
</comment>
<comment type="catalytic activity">
    <reaction evidence="17">
        <text>(2E)-decenoyl-[ACP] + NADH + H(+) = decanoyl-[ACP] + NAD(+)</text>
        <dbReference type="Rhea" id="RHEA:54936"/>
        <dbReference type="Rhea" id="RHEA-COMP:9639"/>
        <dbReference type="Rhea" id="RHEA-COMP:9640"/>
        <dbReference type="ChEBI" id="CHEBI:15378"/>
        <dbReference type="ChEBI" id="CHEBI:57540"/>
        <dbReference type="ChEBI" id="CHEBI:57945"/>
        <dbReference type="ChEBI" id="CHEBI:78467"/>
        <dbReference type="ChEBI" id="CHEBI:78468"/>
    </reaction>
    <physiologicalReaction direction="left-to-right" evidence="17">
        <dbReference type="Rhea" id="RHEA:54937"/>
    </physiologicalReaction>
</comment>
<comment type="catalytic activity">
    <reaction evidence="15 17">
        <text>(2E)-hexadecenoyl-[ACP] + NADH + H(+) = hexadecanoyl-[ACP] + NAD(+)</text>
        <dbReference type="Rhea" id="RHEA:54900"/>
        <dbReference type="Rhea" id="RHEA-COMP:9651"/>
        <dbReference type="Rhea" id="RHEA-COMP:9652"/>
        <dbReference type="ChEBI" id="CHEBI:15378"/>
        <dbReference type="ChEBI" id="CHEBI:57540"/>
        <dbReference type="ChEBI" id="CHEBI:57945"/>
        <dbReference type="ChEBI" id="CHEBI:78481"/>
        <dbReference type="ChEBI" id="CHEBI:78483"/>
    </reaction>
    <physiologicalReaction direction="left-to-right" evidence="15 17">
        <dbReference type="Rhea" id="RHEA:54901"/>
    </physiologicalReaction>
</comment>
<comment type="catalytic activity">
    <reaction evidence="15 17">
        <text>(2E,9Z)-hexadecadienoyl-[ACP] + NADH + H(+) = (9Z)-hexadecenoyl-[ACP] + NAD(+)</text>
        <dbReference type="Rhea" id="RHEA:54904"/>
        <dbReference type="Rhea" id="RHEA-COMP:10800"/>
        <dbReference type="Rhea" id="RHEA-COMP:14036"/>
        <dbReference type="ChEBI" id="CHEBI:15378"/>
        <dbReference type="ChEBI" id="CHEBI:57540"/>
        <dbReference type="ChEBI" id="CHEBI:57945"/>
        <dbReference type="ChEBI" id="CHEBI:83989"/>
        <dbReference type="ChEBI" id="CHEBI:138403"/>
    </reaction>
    <physiologicalReaction direction="left-to-right" evidence="15 17">
        <dbReference type="Rhea" id="RHEA:54905"/>
    </physiologicalReaction>
</comment>
<comment type="catalytic activity">
    <reaction evidence="6">
        <text>(2E)-5-methylhexenoyl-[ACP] + NADH + H(+) = 5-methylhexanoyl-[ACP] + NAD(+)</text>
        <dbReference type="Rhea" id="RHEA:55124"/>
        <dbReference type="Rhea" id="RHEA-COMP:14097"/>
        <dbReference type="Rhea" id="RHEA-COMP:14098"/>
        <dbReference type="ChEBI" id="CHEBI:15378"/>
        <dbReference type="ChEBI" id="CHEBI:57540"/>
        <dbReference type="ChEBI" id="CHEBI:57945"/>
        <dbReference type="ChEBI" id="CHEBI:138610"/>
        <dbReference type="ChEBI" id="CHEBI:138611"/>
    </reaction>
    <physiologicalReaction direction="left-to-right" evidence="6">
        <dbReference type="Rhea" id="RHEA:55125"/>
    </physiologicalReaction>
</comment>
<comment type="activity regulation">
    <text evidence="3 4 8 9 10 13 16 18 20">Inhibited by diazaborines, triclosan (5-chloro-2-2,4-dichlorophenoxyphenol), 1,4-disubstituted imidazoles, 1,4-benzodiazepine derivatives, naphthyridinone derivatives, luteolin and curcumin (PubMed:10398587, PubMed:10493822, PubMed:11514139, PubMed:12109908, PubMed:12699381, PubMed:19959361, PubMed:8119879, PubMed:8953047, PubMed:9707111). The antibiotic diazaborine interferes with the activity by binding to the protein and NAD (PubMed:8119879).</text>
</comment>
<comment type="biophysicochemical properties">
    <kinetics>
        <KM evidence="12">3.3 uM for trans-2-dodecenoyl-ACP (DD-ACP)(at 25 degrees Celsius and pH 8)</KM>
        <KM evidence="16">22 uM for crotonyl-ACP (at 30 degrees Celsius and pH 7.5)</KM>
        <KM evidence="12">24 uM for trans-2-dodecenoyl-CoA (DD-CoA)(at 25 degrees Celsius and pH 8)</KM>
        <KM evidence="16">2700 uM for crotonyl-CoA (at 30 degrees Celsius and pH 7.5)</KM>
    </kinetics>
</comment>
<comment type="pathway">
    <text evidence="15">Lipid metabolism; fatty acid biosynthesis.</text>
</comment>
<comment type="pathway">
    <text evidence="23">Cofactor biosynthesis; biotin biosynthesis.</text>
</comment>
<comment type="subunit">
    <text evidence="2 3 4 5 8 9 10 18">Homotetramer.</text>
</comment>
<comment type="interaction">
    <interactant intactId="EBI-370029">
        <id>P0AEK4</id>
    </interactant>
    <interactant intactId="EBI-544031">
        <id>P0AF90</id>
        <label>rraB</label>
    </interactant>
    <organismsDiffer>false</organismsDiffer>
    <experiments>2</experiments>
</comment>
<comment type="similarity">
    <text evidence="22">Belongs to the short-chain dehydrogenases/reductases (SDR) family. FabI subfamily.</text>
</comment>
<proteinExistence type="evidence at protein level"/>
<reference key="1">
    <citation type="journal article" date="1992" name="J. Gen. Microbiol.">
        <title>Sequences of the envM gene and of two mutated alleles in Escherichia coli.</title>
        <authorList>
            <person name="Bergler H."/>
            <person name="Hoegenauer G."/>
            <person name="Turnowsky F."/>
        </authorList>
    </citation>
    <scope>NUCLEOTIDE SEQUENCE [GENOMIC DNA]</scope>
    <scope>PROTEIN SEQUENCE OF 2-31</scope>
    <scope>MUTAGENESIS OF GLY-93</scope>
</reference>
<reference key="2">
    <citation type="journal article" date="1994" name="Plant Mol. Biol.">
        <title>The use of a hybrid genetic system to study the functional relationship between prokaryotic and plant multi-enzyme fatty acid synthetase complexes.</title>
        <authorList>
            <person name="Kater M.M."/>
            <person name="Koningstein G.M."/>
            <person name="Nijkamp H.J.J."/>
            <person name="Stuitje A.R."/>
        </authorList>
    </citation>
    <scope>NUCLEOTIDE SEQUENCE [GENOMIC DNA]</scope>
    <source>
        <strain>K12 / W3110 / ATCC 27325 / DSM 5911</strain>
    </source>
</reference>
<reference key="3">
    <citation type="journal article" date="1996" name="DNA Res.">
        <title>A 570-kb DNA sequence of the Escherichia coli K-12 genome corresponding to the 28.0-40.1 min region on the linkage map.</title>
        <authorList>
            <person name="Aiba H."/>
            <person name="Baba T."/>
            <person name="Fujita K."/>
            <person name="Hayashi K."/>
            <person name="Inada T."/>
            <person name="Isono K."/>
            <person name="Itoh T."/>
            <person name="Kasai H."/>
            <person name="Kashimoto K."/>
            <person name="Kimura S."/>
            <person name="Kitakawa M."/>
            <person name="Kitagawa M."/>
            <person name="Makino K."/>
            <person name="Miki T."/>
            <person name="Mizobuchi K."/>
            <person name="Mori H."/>
            <person name="Mori T."/>
            <person name="Motomura K."/>
            <person name="Nakade S."/>
            <person name="Nakamura Y."/>
            <person name="Nashimoto H."/>
            <person name="Nishio Y."/>
            <person name="Oshima T."/>
            <person name="Saito N."/>
            <person name="Sampei G."/>
            <person name="Seki Y."/>
            <person name="Sivasundaram S."/>
            <person name="Tagami H."/>
            <person name="Takeda J."/>
            <person name="Takemoto K."/>
            <person name="Takeuchi Y."/>
            <person name="Wada C."/>
            <person name="Yamamoto Y."/>
            <person name="Horiuchi T."/>
        </authorList>
    </citation>
    <scope>NUCLEOTIDE SEQUENCE [LARGE SCALE GENOMIC DNA]</scope>
    <source>
        <strain>K12 / W3110 / ATCC 27325 / DSM 5911</strain>
    </source>
</reference>
<reference key="4">
    <citation type="journal article" date="1997" name="Science">
        <title>The complete genome sequence of Escherichia coli K-12.</title>
        <authorList>
            <person name="Blattner F.R."/>
            <person name="Plunkett G. III"/>
            <person name="Bloch C.A."/>
            <person name="Perna N.T."/>
            <person name="Burland V."/>
            <person name="Riley M."/>
            <person name="Collado-Vides J."/>
            <person name="Glasner J.D."/>
            <person name="Rode C.K."/>
            <person name="Mayhew G.F."/>
            <person name="Gregor J."/>
            <person name="Davis N.W."/>
            <person name="Kirkpatrick H.A."/>
            <person name="Goeden M.A."/>
            <person name="Rose D.J."/>
            <person name="Mau B."/>
            <person name="Shao Y."/>
        </authorList>
    </citation>
    <scope>NUCLEOTIDE SEQUENCE [LARGE SCALE GENOMIC DNA]</scope>
    <source>
        <strain>K12 / MG1655 / ATCC 47076</strain>
    </source>
</reference>
<reference key="5">
    <citation type="journal article" date="2006" name="Mol. Syst. Biol.">
        <title>Highly accurate genome sequences of Escherichia coli K-12 strains MG1655 and W3110.</title>
        <authorList>
            <person name="Hayashi K."/>
            <person name="Morooka N."/>
            <person name="Yamamoto Y."/>
            <person name="Fujita K."/>
            <person name="Isono K."/>
            <person name="Choi S."/>
            <person name="Ohtsubo E."/>
            <person name="Baba T."/>
            <person name="Wanner B.L."/>
            <person name="Mori H."/>
            <person name="Horiuchi T."/>
        </authorList>
    </citation>
    <scope>NUCLEOTIDE SEQUENCE [LARGE SCALE GENOMIC DNA]</scope>
    <source>
        <strain>K12 / W3110 / ATCC 27325 / DSM 5911</strain>
    </source>
</reference>
<reference key="6">
    <citation type="journal article" date="1994" name="J. Biol. Chem.">
        <title>Protein EnvM is the NADH-dependent enoyl-ACP reductase (FabI) of Escherichia coli.</title>
        <authorList>
            <person name="Bergler H."/>
            <person name="Wallner P."/>
            <person name="Ebeling A."/>
            <person name="Leitinger B."/>
            <person name="Fuchsbichler S."/>
            <person name="Aschauer H."/>
            <person name="Kollenz G."/>
            <person name="Hoegenauer G."/>
            <person name="Turnowsky F."/>
        </authorList>
    </citation>
    <scope>PARTIAL PROTEIN SEQUENCE</scope>
    <scope>FUNCTION AS AN ENOYL-ACP REDUCTASE</scope>
    <scope>CATALYTIC ACTIVITY</scope>
    <scope>BIOPHYSICOCHEMICAL PROPERTIES</scope>
    <scope>ACTIVITY REGULATION</scope>
</reference>
<reference key="7">
    <citation type="journal article" date="1997" name="Electrophoresis">
        <title>Comparing the predicted and observed properties of proteins encoded in the genome of Escherichia coli K-12.</title>
        <authorList>
            <person name="Link A.J."/>
            <person name="Robison K."/>
            <person name="Church G.M."/>
        </authorList>
    </citation>
    <scope>PROTEIN SEQUENCE OF 2-13</scope>
    <source>
        <strain>K12 / EMG2</strain>
    </source>
</reference>
<reference key="8">
    <citation type="submission" date="1996-02" db="UniProtKB">
        <authorList>
            <person name="Frutiger S."/>
            <person name="Hughes G.J."/>
            <person name="Pasquali C."/>
            <person name="Hochstrasser D.F."/>
        </authorList>
    </citation>
    <scope>PROTEIN SEQUENCE OF 2-12</scope>
    <source>
        <strain>K12 / W3110 / ATCC 27325 / DSM 5911</strain>
    </source>
</reference>
<reference key="9">
    <citation type="journal article" date="1995" name="J. Biol. Chem.">
        <title>Enoyl-acyl carrier protein reductase (fabI) plays a determinant role in completing cycles of fatty acid elongation in Escherichia coli.</title>
        <authorList>
            <person name="Heath R.J."/>
            <person name="Rock C.O."/>
        </authorList>
    </citation>
    <scope>FUNCTION IN FATTY ACID BIOSYNTHESIS</scope>
    <scope>CATALYTIC ACTIVITY</scope>
    <scope>PATHWAY</scope>
</reference>
<reference key="10">
    <citation type="journal article" date="1996" name="J. Biol. Chem.">
        <title>Roles of the FabA and FabZ beta-hydroxyacyl-acyl carrier protein dehydratases in Escherichia coli fatty acid biosynthesis.</title>
        <authorList>
            <person name="Heath R.J."/>
            <person name="Rock C.O."/>
        </authorList>
    </citation>
    <scope>FUNCTION</scope>
    <scope>CATALYTIC ACTIVITY</scope>
</reference>
<reference key="11">
    <citation type="journal article" date="1998" name="Nature">
        <title>Triclosan targets lipid synthesis.</title>
        <authorList>
            <person name="McMurry L.M."/>
            <person name="Oethinger M."/>
            <person name="Levy S.B."/>
        </authorList>
    </citation>
    <scope>ACTIVITY REGULATION</scope>
    <scope>MUTAGENESIS OF GLY-93; MET-159 AND PHE-203</scope>
</reference>
<reference key="12">
    <citation type="journal article" date="2000" name="J. Bacteriol.">
        <title>Beta-ketoacyl-acyl carrier protein synthase III (FabH) is a determining factor in branched-chain fatty acid biosynthesis.</title>
        <authorList>
            <person name="Choi K.-H."/>
            <person name="Heath R.J."/>
            <person name="Rock C.O."/>
        </authorList>
    </citation>
    <scope>FUNCTION</scope>
    <scope>CATALYTIC ACTIVITY</scope>
</reference>
<reference key="13">
    <citation type="journal article" date="2000" name="J. Biol. Chem.">
        <title>The enoyl-[acyl-carrier-protein] reductases FabI and FabL from Bacillus subtilis.</title>
        <authorList>
            <person name="Heath R.J."/>
            <person name="Su N."/>
            <person name="Murphy C.K."/>
            <person name="Rock C.O."/>
        </authorList>
    </citation>
    <scope>CATALYTIC ACTIVITY</scope>
</reference>
<reference key="14">
    <citation type="journal article" date="2010" name="Bioorg. Med. Chem. Lett.">
        <title>Novel enoyl-ACP reductase (FabI) potential inhibitors of Escherichia coli from Chinese medicine monomers.</title>
        <authorList>
            <person name="Yao J."/>
            <person name="Zhang Q."/>
            <person name="Min J."/>
            <person name="He J."/>
            <person name="Yu Z."/>
        </authorList>
    </citation>
    <scope>ACTIVITY REGULATION</scope>
</reference>
<reference key="15">
    <citation type="journal article" date="2010" name="Nat. Chem. Biol.">
        <title>Biotin synthesis begins by hijacking the fatty acid synthetic pathway.</title>
        <authorList>
            <person name="Lin S."/>
            <person name="Hanson R.E."/>
            <person name="Cronan J.E."/>
        </authorList>
    </citation>
    <scope>FUNCTION IN BIOTIN BIOSYNTHESIS</scope>
    <scope>PATHWAY</scope>
</reference>
<reference key="16">
    <citation type="journal article" date="1996" name="Science">
        <title>A mechanism of drug action revealed by structural studies of enoyl reductase.</title>
        <authorList>
            <person name="Baldock C."/>
            <person name="Rafferty J.B."/>
            <person name="Sedelnikova S.E."/>
            <person name="Baker P.J."/>
            <person name="Stuitje A.R."/>
            <person name="Slabas A.R."/>
            <person name="Hawkes T.R."/>
            <person name="Rice D.W."/>
        </authorList>
    </citation>
    <scope>X-RAY CRYSTALLOGRAPHY (2.5 ANGSTROMS) IN COMPLEX WITH NAD AND INHIBITOR</scope>
    <scope>ACTIVITY REGULATION</scope>
    <scope>SUBUNIT</scope>
</reference>
<reference key="17">
    <citation type="journal article" date="1999" name="Biochemistry">
        <title>Kinetic and structural characteristics of the inhibition of enoyl (acyl carrier protein) reductase by triclosan.</title>
        <authorList>
            <person name="Ward W.H."/>
            <person name="Holdgate G.A."/>
            <person name="Rowsell S."/>
            <person name="McLean E.G."/>
            <person name="Pauptit R.A."/>
            <person name="Clayton E."/>
            <person name="Nichols W.W."/>
            <person name="Colls J.G."/>
            <person name="Minshull C.A."/>
            <person name="Jude D.A."/>
            <person name="Mistry A."/>
            <person name="Timms D."/>
            <person name="Camble R."/>
            <person name="Hales N.J."/>
            <person name="Britton C.J."/>
            <person name="Taylor I.W."/>
        </authorList>
    </citation>
    <scope>X-RAY CRYSTALLOGRAPHY (1.9 ANGSTROMS) IN COMPLEX WITH NAD AND INHIBITOR</scope>
    <scope>ACTIVITY REGULATION</scope>
    <scope>SUBUNIT</scope>
</reference>
<reference key="18">
    <citation type="journal article" date="1999" name="J. Mol. Biol.">
        <title>Structural basis and mechanism of enoyl reductase inhibition by triclosan.</title>
        <authorList>
            <person name="Stewart M.J."/>
            <person name="Parikh S."/>
            <person name="Xiao G."/>
            <person name="Tonge P.J."/>
            <person name="Kisker C."/>
        </authorList>
    </citation>
    <scope>X-RAY CRYSTALLOGRAPHY (1.75 ANGSTROMS) IN COMPLEX WITH NAD AND INHIBITOR</scope>
    <scope>ACTIVITY REGULATION</scope>
    <scope>SUBUNIT</scope>
</reference>
<reference key="19">
    <citation type="journal article" date="1999" name="Nature">
        <title>Molecular basis of triclosan activity.</title>
        <authorList>
            <person name="Levy C.W."/>
            <person name="Roujeinikova A."/>
            <person name="Sedelnikova S."/>
            <person name="Baker P.J."/>
            <person name="Stuitje A.R."/>
            <person name="Slabas A.R."/>
            <person name="Rice D.W."/>
            <person name="Rafferty J.B."/>
        </authorList>
    </citation>
    <scope>X-RAY CRYSTALLOGRAPHY (2.2 ANGSTROMS) IN COMPLEX WITH NAD AND INHIBITOR</scope>
</reference>
<reference key="20">
    <citation type="journal article" date="1999" name="Protein Sci.">
        <title>Molecular basis for triclosan activity involves a flipping loop in the active site.</title>
        <authorList>
            <person name="Qiu X."/>
            <person name="Janson C.A."/>
            <person name="Court R.I."/>
            <person name="Smyth M.G."/>
            <person name="Payne D.J."/>
            <person name="Abdel-Meguid S.S."/>
        </authorList>
    </citation>
    <scope>X-RAY CRYSTALLOGRAPHY (2.0 ANGSTROMS) IN COMPLEX WITH NAD AND INHIBITOR</scope>
</reference>
<reference key="21">
    <citation type="journal article" date="2001" name="Bioorg. Med. Chem. Lett.">
        <title>1,4-Disubstituted imidazoles are potential antibacterial agents functioning as inhibitors of enoyl acyl carrier protein reductase (FabI).</title>
        <authorList>
            <person name="Heerding D.A."/>
            <person name="Chan G."/>
            <person name="DeWolf W.E."/>
            <person name="Fosberry A.P."/>
            <person name="Janson C.A."/>
            <person name="Jaworski D.D."/>
            <person name="McManus E."/>
            <person name="Miller W.H."/>
            <person name="Moore T.D."/>
            <person name="Payne D.J."/>
            <person name="Qiu X."/>
            <person name="Rittenhouse S.F."/>
            <person name="Slater-Radosti C."/>
            <person name="Smith W."/>
            <person name="Takata D.T."/>
            <person name="Vaidya K.S."/>
            <person name="Yuan C.C."/>
            <person name="Huffman W.F."/>
        </authorList>
    </citation>
    <scope>X-RAY CRYSTALLOGRAPHY (2.4 ANGSTROMS) IN COMPLEX WITH NAD AND INHIBITOR</scope>
    <scope>ACTIVITY REGULATION</scope>
</reference>
<reference key="22">
    <citation type="journal article" date="2002" name="J. Med. Chem.">
        <title>Discovery of aminopyridine-based inhibitors of bacterial enoyl-ACP reductase (FabI).</title>
        <authorList>
            <person name="Miller W.H."/>
            <person name="Seefeld M.A."/>
            <person name="Newlander K.A."/>
            <person name="Uzinskas I.N."/>
            <person name="Burgess W.J."/>
            <person name="Heerding D.A."/>
            <person name="Yuan C.C."/>
            <person name="Head M.S."/>
            <person name="Payne D.J."/>
            <person name="Rittenhouse S.F."/>
            <person name="Moore T.D."/>
            <person name="Pearson S.C."/>
            <person name="Berry V."/>
            <person name="DeWolf W.E. Jr."/>
            <person name="Keller P.M."/>
            <person name="Polizzi B.J."/>
            <person name="Qiu X."/>
            <person name="Janson C.A."/>
            <person name="Huffman W.F."/>
        </authorList>
    </citation>
    <scope>X-RAY CRYSTALLOGRAPHY (2.4 ANGSTROMS) IN COMPLEX WITH NAD AND INHIBITOR</scope>
    <scope>ACTIVITY REGULATION</scope>
</reference>
<reference key="23">
    <citation type="journal article" date="2003" name="J. Med. Chem.">
        <title>Indole naphthyridinones as inhibitors of bacterial enoyl-ACP reductases FabI and FabK.</title>
        <authorList>
            <person name="Seefeld M.A."/>
            <person name="Miller W.H."/>
            <person name="Newlander K.A."/>
            <person name="Burgess W.J."/>
            <person name="DeWolf W.E. Jr."/>
            <person name="Elkins P.A."/>
            <person name="Head M.S."/>
            <person name="Jakas D.R."/>
            <person name="Janson C.A."/>
            <person name="Keller P.M."/>
            <person name="Manley P.J."/>
            <person name="Moore T.D."/>
            <person name="Payne D.J."/>
            <person name="Pearson S."/>
            <person name="Polizzi B.J."/>
            <person name="Qiu X."/>
            <person name="Rittenhouse S.F."/>
            <person name="Uzinskas I.N."/>
            <person name="Wallis N.G."/>
            <person name="Huffman W.F."/>
        </authorList>
    </citation>
    <scope>X-RAY CRYSTALLOGRAPHY (2.33 ANGSTROMS) IN COMPLEX WITH NAD AND INHIBITOR</scope>
    <scope>ACTIVITY REGULATION</scope>
</reference>
<reference key="24">
    <citation type="journal article" date="2006" name="J. Biol. Chem.">
        <title>Structure of acyl carrier protein bound to FabI, the FASII enoyl reductase from Escherichia coli.</title>
        <authorList>
            <person name="Rafi S."/>
            <person name="Novichenok P."/>
            <person name="Kolappan S."/>
            <person name="Zhang X."/>
            <person name="Stratton C.F."/>
            <person name="Rawat R."/>
            <person name="Kisker C."/>
            <person name="Simmerling C."/>
            <person name="Tonge P.J."/>
        </authorList>
    </citation>
    <scope>X-RAY CRYSTALLOGRAPHY (2.7 ANGSTROMS)</scope>
    <scope>MUTAGENESIS OF TYR-146; TYR-156; LYS-201; ARG-204 AND LYS-205</scope>
    <scope>BIOPHYSICOCHEMICAL PROPERTIES</scope>
</reference>